<accession>A4FXY4</accession>
<name>COBD_METM5</name>
<reference key="1">
    <citation type="submission" date="2007-03" db="EMBL/GenBank/DDBJ databases">
        <title>Complete sequence of chromosome of Methanococcus maripaludis C5.</title>
        <authorList>
            <consortium name="US DOE Joint Genome Institute"/>
            <person name="Copeland A."/>
            <person name="Lucas S."/>
            <person name="Lapidus A."/>
            <person name="Barry K."/>
            <person name="Glavina del Rio T."/>
            <person name="Dalin E."/>
            <person name="Tice H."/>
            <person name="Pitluck S."/>
            <person name="Chertkov O."/>
            <person name="Brettin T."/>
            <person name="Bruce D."/>
            <person name="Han C."/>
            <person name="Detter J.C."/>
            <person name="Schmutz J."/>
            <person name="Larimer F."/>
            <person name="Land M."/>
            <person name="Hauser L."/>
            <person name="Kyrpides N."/>
            <person name="Mikhailova N."/>
            <person name="Sieprawska-Lupa M."/>
            <person name="Whitman W.B."/>
            <person name="Richardson P."/>
        </authorList>
    </citation>
    <scope>NUCLEOTIDE SEQUENCE [LARGE SCALE GENOMIC DNA]</scope>
    <source>
        <strain>C5 / ATCC BAA-1333</strain>
    </source>
</reference>
<evidence type="ECO:0000255" key="1">
    <source>
        <dbReference type="HAMAP-Rule" id="MF_00024"/>
    </source>
</evidence>
<protein>
    <recommendedName>
        <fullName evidence="1">Probable cobalamin biosynthesis protein CobD</fullName>
    </recommendedName>
</protein>
<proteinExistence type="inferred from homology"/>
<organism>
    <name type="scientific">Methanococcus maripaludis (strain C5 / ATCC BAA-1333)</name>
    <dbReference type="NCBI Taxonomy" id="402880"/>
    <lineage>
        <taxon>Archaea</taxon>
        <taxon>Methanobacteriati</taxon>
        <taxon>Methanobacteriota</taxon>
        <taxon>Methanomada group</taxon>
        <taxon>Methanococci</taxon>
        <taxon>Methanococcales</taxon>
        <taxon>Methanococcaceae</taxon>
        <taxon>Methanococcus</taxon>
    </lineage>
</organism>
<sequence length="306" mass="34173">MINPIYLILADFFDRYIGEPPEKVHPVIFIGKLIIFFENVFKSTNSINKSRDLLFGFFNVILVLAIVFFMAYEIEQVINSISNSYIRISLYSIILSFSIGHKSLIEFSKAPIRYIVNNDIDGAKKSVQCVVSRNTSELGKKHILSASIESASENITDSIIAPLIYVAIFGLPGAFLYRAVNTFDAMIGYKSEKYLYYGKTAAYLDDILNFIPSRIAGMLLIITAPFYGGKIKSAFYGFFKEGNKTPSPNSGYTMATIANSLNMGLEKIGCYKLGKGEITIEKALNSLKAVDYSVLLFLIIYTVLLM</sequence>
<keyword id="KW-1003">Cell membrane</keyword>
<keyword id="KW-0169">Cobalamin biosynthesis</keyword>
<keyword id="KW-0472">Membrane</keyword>
<keyword id="KW-0812">Transmembrane</keyword>
<keyword id="KW-1133">Transmembrane helix</keyword>
<gene>
    <name evidence="1" type="primary">cobD</name>
    <name type="ordered locus">MmarC5_0758</name>
</gene>
<comment type="function">
    <text evidence="1">Converts cobyric acid to cobinamide by the addition of aminopropanol on the F carboxylic group.</text>
</comment>
<comment type="pathway">
    <text evidence="1">Cofactor biosynthesis; adenosylcobalamin biosynthesis.</text>
</comment>
<comment type="subcellular location">
    <subcellularLocation>
        <location evidence="1">Cell membrane</location>
        <topology evidence="1">Multi-pass membrane protein</topology>
    </subcellularLocation>
</comment>
<comment type="similarity">
    <text evidence="1">Belongs to the CobD/CbiB family.</text>
</comment>
<dbReference type="EMBL" id="CP000609">
    <property type="protein sequence ID" value="ABO35068.1"/>
    <property type="molecule type" value="Genomic_DNA"/>
</dbReference>
<dbReference type="RefSeq" id="WP_011868522.1">
    <property type="nucleotide sequence ID" value="NC_009135.1"/>
</dbReference>
<dbReference type="STRING" id="402880.MmarC5_0758"/>
<dbReference type="GeneID" id="4928305"/>
<dbReference type="KEGG" id="mmq:MmarC5_0758"/>
<dbReference type="eggNOG" id="arCOG04274">
    <property type="taxonomic scope" value="Archaea"/>
</dbReference>
<dbReference type="HOGENOM" id="CLU_054212_0_2_2"/>
<dbReference type="OrthoDB" id="46105at2157"/>
<dbReference type="UniPathway" id="UPA00148"/>
<dbReference type="Proteomes" id="UP000000253">
    <property type="component" value="Chromosome"/>
</dbReference>
<dbReference type="GO" id="GO:0005886">
    <property type="term" value="C:plasma membrane"/>
    <property type="evidence" value="ECO:0007669"/>
    <property type="project" value="UniProtKB-SubCell"/>
</dbReference>
<dbReference type="GO" id="GO:0015420">
    <property type="term" value="F:ABC-type vitamin B12 transporter activity"/>
    <property type="evidence" value="ECO:0007669"/>
    <property type="project" value="UniProtKB-UniRule"/>
</dbReference>
<dbReference type="GO" id="GO:0048472">
    <property type="term" value="F:threonine-phosphate decarboxylase activity"/>
    <property type="evidence" value="ECO:0007669"/>
    <property type="project" value="InterPro"/>
</dbReference>
<dbReference type="GO" id="GO:0009236">
    <property type="term" value="P:cobalamin biosynthetic process"/>
    <property type="evidence" value="ECO:0007669"/>
    <property type="project" value="UniProtKB-UniRule"/>
</dbReference>
<dbReference type="HAMAP" id="MF_00024">
    <property type="entry name" value="CobD_CbiB"/>
    <property type="match status" value="1"/>
</dbReference>
<dbReference type="InterPro" id="IPR004485">
    <property type="entry name" value="Cobalamin_biosynth_CobD/CbiB"/>
</dbReference>
<dbReference type="NCBIfam" id="TIGR00380">
    <property type="entry name" value="cobal_cbiB"/>
    <property type="match status" value="1"/>
</dbReference>
<dbReference type="PANTHER" id="PTHR34308">
    <property type="entry name" value="COBALAMIN BIOSYNTHESIS PROTEIN CBIB"/>
    <property type="match status" value="1"/>
</dbReference>
<dbReference type="PANTHER" id="PTHR34308:SF1">
    <property type="entry name" value="COBALAMIN BIOSYNTHESIS PROTEIN CBIB"/>
    <property type="match status" value="1"/>
</dbReference>
<dbReference type="Pfam" id="PF03186">
    <property type="entry name" value="CobD_Cbib"/>
    <property type="match status" value="1"/>
</dbReference>
<feature type="chain" id="PRO_1000074380" description="Probable cobalamin biosynthesis protein CobD">
    <location>
        <begin position="1"/>
        <end position="306"/>
    </location>
</feature>
<feature type="transmembrane region" description="Helical" evidence="1">
    <location>
        <begin position="17"/>
        <end position="37"/>
    </location>
</feature>
<feature type="transmembrane region" description="Helical" evidence="1">
    <location>
        <begin position="54"/>
        <end position="74"/>
    </location>
</feature>
<feature type="transmembrane region" description="Helical" evidence="1">
    <location>
        <begin position="88"/>
        <end position="108"/>
    </location>
</feature>
<feature type="transmembrane region" description="Helical" evidence="1">
    <location>
        <begin position="155"/>
        <end position="175"/>
    </location>
</feature>
<feature type="transmembrane region" description="Helical" evidence="1">
    <location>
        <begin position="207"/>
        <end position="227"/>
    </location>
</feature>
<feature type="transmembrane region" description="Helical" evidence="1">
    <location>
        <begin position="286"/>
        <end position="306"/>
    </location>
</feature>